<evidence type="ECO:0000256" key="1">
    <source>
        <dbReference type="SAM" id="MobiDB-lite"/>
    </source>
</evidence>
<evidence type="ECO:0000303" key="2">
    <source>
    </source>
</evidence>
<evidence type="ECO:0000303" key="3">
    <source>
    </source>
</evidence>
<evidence type="ECO:0000305" key="4"/>
<evidence type="ECO:0000312" key="5">
    <source>
        <dbReference type="HGNC" id="HGNC:24763"/>
    </source>
</evidence>
<name>CF20D_HUMAN</name>
<protein>
    <recommendedName>
        <fullName evidence="4">Protein CFAP20DC</fullName>
    </recommendedName>
    <alternativeName>
        <fullName>Uncharacterized protein C3orf67</fullName>
    </alternativeName>
</protein>
<dbReference type="EMBL" id="AK124111">
    <property type="protein sequence ID" value="BAC85775.1"/>
    <property type="molecule type" value="mRNA"/>
</dbReference>
<dbReference type="EMBL" id="AK124920">
    <property type="protein sequence ID" value="BAC85994.1"/>
    <property type="status" value="ALT_INIT"/>
    <property type="molecule type" value="mRNA"/>
</dbReference>
<dbReference type="EMBL" id="AC104300">
    <property type="status" value="NOT_ANNOTATED_CDS"/>
    <property type="molecule type" value="Genomic_DNA"/>
</dbReference>
<dbReference type="EMBL" id="CH471055">
    <property type="protein sequence ID" value="EAW65384.1"/>
    <property type="molecule type" value="Genomic_DNA"/>
</dbReference>
<dbReference type="EMBL" id="BC132815">
    <property type="protein sequence ID" value="AAI32816.1"/>
    <property type="molecule type" value="mRNA"/>
</dbReference>
<dbReference type="EMBL" id="BC151142">
    <property type="protein sequence ID" value="AAI51143.1"/>
    <property type="molecule type" value="mRNA"/>
</dbReference>
<dbReference type="CCDS" id="CCDS33776.1">
    <molecule id="Q6ZVT6-2"/>
</dbReference>
<dbReference type="RefSeq" id="NP_940865.1">
    <molecule id="Q6ZVT6-2"/>
    <property type="nucleotide sequence ID" value="NM_198463.4"/>
</dbReference>
<dbReference type="RefSeq" id="XP_011531758.1">
    <molecule id="Q6ZVT6-1"/>
    <property type="nucleotide sequence ID" value="XM_011533456.3"/>
</dbReference>
<dbReference type="RefSeq" id="XP_011531759.1">
    <molecule id="Q6ZVT6-1"/>
    <property type="nucleotide sequence ID" value="XM_011533457.2"/>
</dbReference>
<dbReference type="RefSeq" id="XP_011531760.1">
    <molecule id="Q6ZVT6-1"/>
    <property type="nucleotide sequence ID" value="XM_011533458.3"/>
</dbReference>
<dbReference type="RefSeq" id="XP_054201582.1">
    <molecule id="Q6ZVT6-1"/>
    <property type="nucleotide sequence ID" value="XM_054345607.1"/>
</dbReference>
<dbReference type="RefSeq" id="XP_054201583.1">
    <molecule id="Q6ZVT6-1"/>
    <property type="nucleotide sequence ID" value="XM_054345608.1"/>
</dbReference>
<dbReference type="RefSeq" id="XP_054201584.1">
    <molecule id="Q6ZVT6-1"/>
    <property type="nucleotide sequence ID" value="XM_054345609.1"/>
</dbReference>
<dbReference type="SMR" id="Q6ZVT6"/>
<dbReference type="BioGRID" id="128349">
    <property type="interactions" value="3"/>
</dbReference>
<dbReference type="FunCoup" id="Q6ZVT6">
    <property type="interactions" value="42"/>
</dbReference>
<dbReference type="IntAct" id="Q6ZVT6">
    <property type="interactions" value="2"/>
</dbReference>
<dbReference type="STRING" id="9606.ENSP00000295966"/>
<dbReference type="GlyGen" id="Q6ZVT6">
    <property type="glycosylation" value="1 site"/>
</dbReference>
<dbReference type="iPTMnet" id="Q6ZVT6"/>
<dbReference type="PhosphoSitePlus" id="Q6ZVT6"/>
<dbReference type="BioMuta" id="C3orf67"/>
<dbReference type="DMDM" id="167006542"/>
<dbReference type="jPOST" id="Q6ZVT6"/>
<dbReference type="Antibodypedia" id="46341">
    <property type="antibodies" value="16 antibodies from 8 providers"/>
</dbReference>
<dbReference type="DNASU" id="200844"/>
<dbReference type="Ensembl" id="ENST00000295966.11">
    <molecule id="Q6ZVT6-2"/>
    <property type="protein sequence ID" value="ENSP00000295966.7"/>
    <property type="gene ID" value="ENSG00000163689.21"/>
</dbReference>
<dbReference type="GeneID" id="200844"/>
<dbReference type="KEGG" id="hsa:200844"/>
<dbReference type="UCSC" id="uc003dks.2">
    <molecule id="Q6ZVT6-1"/>
    <property type="organism name" value="human"/>
</dbReference>
<dbReference type="AGR" id="HGNC:24763"/>
<dbReference type="CTD" id="200844"/>
<dbReference type="DisGeNET" id="200844"/>
<dbReference type="GeneCards" id="CFAP20DC"/>
<dbReference type="HGNC" id="HGNC:24763">
    <property type="gene designation" value="CFAP20DC"/>
</dbReference>
<dbReference type="HPA" id="ENSG00000163689">
    <property type="expression patterns" value="Group enriched (esophagus, testis)"/>
</dbReference>
<dbReference type="neXtProt" id="NX_Q6ZVT6"/>
<dbReference type="OpenTargets" id="ENSG00000163689"/>
<dbReference type="VEuPathDB" id="HostDB:ENSG00000163689"/>
<dbReference type="eggNOG" id="KOG3213">
    <property type="taxonomic scope" value="Eukaryota"/>
</dbReference>
<dbReference type="GeneTree" id="ENSGT00390000005497"/>
<dbReference type="HOGENOM" id="CLU_017755_1_0_1"/>
<dbReference type="InParanoid" id="Q6ZVT6"/>
<dbReference type="OrthoDB" id="10261083at2759"/>
<dbReference type="PAN-GO" id="Q6ZVT6">
    <property type="GO annotations" value="0 GO annotations based on evolutionary models"/>
</dbReference>
<dbReference type="PhylomeDB" id="Q6ZVT6"/>
<dbReference type="TreeFam" id="TF331222"/>
<dbReference type="PathwayCommons" id="Q6ZVT6"/>
<dbReference type="SignaLink" id="Q6ZVT6"/>
<dbReference type="BioGRID-ORCS" id="200844">
    <property type="hits" value="12 hits in 1132 CRISPR screens"/>
</dbReference>
<dbReference type="ChiTaRS" id="C3orf67">
    <property type="organism name" value="human"/>
</dbReference>
<dbReference type="GenomeRNAi" id="200844"/>
<dbReference type="Pharos" id="Q6ZVT6">
    <property type="development level" value="Tdark"/>
</dbReference>
<dbReference type="PRO" id="PR:Q6ZVT6"/>
<dbReference type="Proteomes" id="UP000005640">
    <property type="component" value="Chromosome 3"/>
</dbReference>
<dbReference type="RNAct" id="Q6ZVT6">
    <property type="molecule type" value="protein"/>
</dbReference>
<dbReference type="Bgee" id="ENSG00000163689">
    <property type="expression patterns" value="Expressed in lower esophagus mucosa and 118 other cell types or tissues"/>
</dbReference>
<dbReference type="ExpressionAtlas" id="Q6ZVT6">
    <property type="expression patterns" value="baseline and differential"/>
</dbReference>
<dbReference type="InterPro" id="IPR040441">
    <property type="entry name" value="CFA20/CFAP20DC"/>
</dbReference>
<dbReference type="InterPro" id="IPR007714">
    <property type="entry name" value="CFA20_dom"/>
</dbReference>
<dbReference type="PANTHER" id="PTHR12458">
    <property type="entry name" value="ORF PROTEIN"/>
    <property type="match status" value="1"/>
</dbReference>
<dbReference type="Pfam" id="PF05018">
    <property type="entry name" value="CFA20_dom"/>
    <property type="match status" value="1"/>
</dbReference>
<comment type="alternative products">
    <event type="alternative splicing"/>
    <isoform>
        <id>Q6ZVT6-1</id>
        <name>1</name>
        <sequence type="displayed"/>
    </isoform>
    <isoform>
        <id>Q6ZVT6-2</id>
        <name>2</name>
        <sequence type="described" ref="VSP_030913"/>
    </isoform>
</comment>
<comment type="sequence caution" evidence="4">
    <conflict type="erroneous initiation">
        <sequence resource="EMBL-CDS" id="BAC85994"/>
    </conflict>
    <text>Truncated N-terminus.</text>
</comment>
<feature type="chain" id="PRO_0000317180" description="Protein CFAP20DC">
    <location>
        <begin position="1"/>
        <end position="689"/>
    </location>
</feature>
<feature type="region of interest" description="Disordered" evidence="1">
    <location>
        <begin position="241"/>
        <end position="263"/>
    </location>
</feature>
<feature type="region of interest" description="Disordered" evidence="1">
    <location>
        <begin position="333"/>
        <end position="423"/>
    </location>
</feature>
<feature type="region of interest" description="Disordered" evidence="1">
    <location>
        <begin position="584"/>
        <end position="659"/>
    </location>
</feature>
<feature type="compositionally biased region" description="Polar residues" evidence="1">
    <location>
        <begin position="251"/>
        <end position="260"/>
    </location>
</feature>
<feature type="compositionally biased region" description="Polar residues" evidence="1">
    <location>
        <begin position="343"/>
        <end position="359"/>
    </location>
</feature>
<feature type="compositionally biased region" description="Acidic residues" evidence="1">
    <location>
        <begin position="394"/>
        <end position="405"/>
    </location>
</feature>
<feature type="compositionally biased region" description="Polar residues" evidence="1">
    <location>
        <begin position="409"/>
        <end position="421"/>
    </location>
</feature>
<feature type="compositionally biased region" description="Low complexity" evidence="1">
    <location>
        <begin position="584"/>
        <end position="593"/>
    </location>
</feature>
<feature type="splice variant" id="VSP_030913" description="In isoform 2." evidence="2 3">
    <location>
        <begin position="407"/>
        <end position="532"/>
    </location>
</feature>
<feature type="sequence variant" id="VAR_056772" description="In dbSNP:rs13324082.">
    <original>S</original>
    <variation>R</variation>
    <location>
        <position position="158"/>
    </location>
</feature>
<feature type="sequence variant" id="VAR_056773" description="In dbSNP:rs35778488.">
    <original>D</original>
    <variation>E</variation>
    <location>
        <position position="304"/>
    </location>
</feature>
<feature type="sequence variant" id="VAR_061575" description="In dbSNP:rs34631714.">
    <original>V</original>
    <variation>M</variation>
    <location>
        <position position="387"/>
    </location>
</feature>
<feature type="sequence variant" id="VAR_061576" description="In dbSNP:rs34322986.">
    <original>S</original>
    <variation>N</variation>
    <location>
        <position position="404"/>
    </location>
</feature>
<reference key="1">
    <citation type="journal article" date="2004" name="Nat. Genet.">
        <title>Complete sequencing and characterization of 21,243 full-length human cDNAs.</title>
        <authorList>
            <person name="Ota T."/>
            <person name="Suzuki Y."/>
            <person name="Nishikawa T."/>
            <person name="Otsuki T."/>
            <person name="Sugiyama T."/>
            <person name="Irie R."/>
            <person name="Wakamatsu A."/>
            <person name="Hayashi K."/>
            <person name="Sato H."/>
            <person name="Nagai K."/>
            <person name="Kimura K."/>
            <person name="Makita H."/>
            <person name="Sekine M."/>
            <person name="Obayashi M."/>
            <person name="Nishi T."/>
            <person name="Shibahara T."/>
            <person name="Tanaka T."/>
            <person name="Ishii S."/>
            <person name="Yamamoto J."/>
            <person name="Saito K."/>
            <person name="Kawai Y."/>
            <person name="Isono Y."/>
            <person name="Nakamura Y."/>
            <person name="Nagahari K."/>
            <person name="Murakami K."/>
            <person name="Yasuda T."/>
            <person name="Iwayanagi T."/>
            <person name="Wagatsuma M."/>
            <person name="Shiratori A."/>
            <person name="Sudo H."/>
            <person name="Hosoiri T."/>
            <person name="Kaku Y."/>
            <person name="Kodaira H."/>
            <person name="Kondo H."/>
            <person name="Sugawara M."/>
            <person name="Takahashi M."/>
            <person name="Kanda K."/>
            <person name="Yokoi T."/>
            <person name="Furuya T."/>
            <person name="Kikkawa E."/>
            <person name="Omura Y."/>
            <person name="Abe K."/>
            <person name="Kamihara K."/>
            <person name="Katsuta N."/>
            <person name="Sato K."/>
            <person name="Tanikawa M."/>
            <person name="Yamazaki M."/>
            <person name="Ninomiya K."/>
            <person name="Ishibashi T."/>
            <person name="Yamashita H."/>
            <person name="Murakawa K."/>
            <person name="Fujimori K."/>
            <person name="Tanai H."/>
            <person name="Kimata M."/>
            <person name="Watanabe M."/>
            <person name="Hiraoka S."/>
            <person name="Chiba Y."/>
            <person name="Ishida S."/>
            <person name="Ono Y."/>
            <person name="Takiguchi S."/>
            <person name="Watanabe S."/>
            <person name="Yosida M."/>
            <person name="Hotuta T."/>
            <person name="Kusano J."/>
            <person name="Kanehori K."/>
            <person name="Takahashi-Fujii A."/>
            <person name="Hara H."/>
            <person name="Tanase T.-O."/>
            <person name="Nomura Y."/>
            <person name="Togiya S."/>
            <person name="Komai F."/>
            <person name="Hara R."/>
            <person name="Takeuchi K."/>
            <person name="Arita M."/>
            <person name="Imose N."/>
            <person name="Musashino K."/>
            <person name="Yuuki H."/>
            <person name="Oshima A."/>
            <person name="Sasaki N."/>
            <person name="Aotsuka S."/>
            <person name="Yoshikawa Y."/>
            <person name="Matsunawa H."/>
            <person name="Ichihara T."/>
            <person name="Shiohata N."/>
            <person name="Sano S."/>
            <person name="Moriya S."/>
            <person name="Momiyama H."/>
            <person name="Satoh N."/>
            <person name="Takami S."/>
            <person name="Terashima Y."/>
            <person name="Suzuki O."/>
            <person name="Nakagawa S."/>
            <person name="Senoh A."/>
            <person name="Mizoguchi H."/>
            <person name="Goto Y."/>
            <person name="Shimizu F."/>
            <person name="Wakebe H."/>
            <person name="Hishigaki H."/>
            <person name="Watanabe T."/>
            <person name="Sugiyama A."/>
            <person name="Takemoto M."/>
            <person name="Kawakami B."/>
            <person name="Yamazaki M."/>
            <person name="Watanabe K."/>
            <person name="Kumagai A."/>
            <person name="Itakura S."/>
            <person name="Fukuzumi Y."/>
            <person name="Fujimori Y."/>
            <person name="Komiyama M."/>
            <person name="Tashiro H."/>
            <person name="Tanigami A."/>
            <person name="Fujiwara T."/>
            <person name="Ono T."/>
            <person name="Yamada K."/>
            <person name="Fujii Y."/>
            <person name="Ozaki K."/>
            <person name="Hirao M."/>
            <person name="Ohmori Y."/>
            <person name="Kawabata A."/>
            <person name="Hikiji T."/>
            <person name="Kobatake N."/>
            <person name="Inagaki H."/>
            <person name="Ikema Y."/>
            <person name="Okamoto S."/>
            <person name="Okitani R."/>
            <person name="Kawakami T."/>
            <person name="Noguchi S."/>
            <person name="Itoh T."/>
            <person name="Shigeta K."/>
            <person name="Senba T."/>
            <person name="Matsumura K."/>
            <person name="Nakajima Y."/>
            <person name="Mizuno T."/>
            <person name="Morinaga M."/>
            <person name="Sasaki M."/>
            <person name="Togashi T."/>
            <person name="Oyama M."/>
            <person name="Hata H."/>
            <person name="Watanabe M."/>
            <person name="Komatsu T."/>
            <person name="Mizushima-Sugano J."/>
            <person name="Satoh T."/>
            <person name="Shirai Y."/>
            <person name="Takahashi Y."/>
            <person name="Nakagawa K."/>
            <person name="Okumura K."/>
            <person name="Nagase T."/>
            <person name="Nomura N."/>
            <person name="Kikuchi H."/>
            <person name="Masuho Y."/>
            <person name="Yamashita R."/>
            <person name="Nakai K."/>
            <person name="Yada T."/>
            <person name="Nakamura Y."/>
            <person name="Ohara O."/>
            <person name="Isogai T."/>
            <person name="Sugano S."/>
        </authorList>
    </citation>
    <scope>NUCLEOTIDE SEQUENCE [LARGE SCALE MRNA] (ISOFORM 2)</scope>
    <scope>NUCLEOTIDE SEQUENCE [LARGE SCALE MRNA] OF 168-689 (ISOFORM 1)</scope>
    <source>
        <tissue>Substantia nigra</tissue>
        <tissue>Testis</tissue>
    </source>
</reference>
<reference key="2">
    <citation type="journal article" date="2006" name="Nature">
        <title>The DNA sequence, annotation and analysis of human chromosome 3.</title>
        <authorList>
            <person name="Muzny D.M."/>
            <person name="Scherer S.E."/>
            <person name="Kaul R."/>
            <person name="Wang J."/>
            <person name="Yu J."/>
            <person name="Sudbrak R."/>
            <person name="Buhay C.J."/>
            <person name="Chen R."/>
            <person name="Cree A."/>
            <person name="Ding Y."/>
            <person name="Dugan-Rocha S."/>
            <person name="Gill R."/>
            <person name="Gunaratne P."/>
            <person name="Harris R.A."/>
            <person name="Hawes A.C."/>
            <person name="Hernandez J."/>
            <person name="Hodgson A.V."/>
            <person name="Hume J."/>
            <person name="Jackson A."/>
            <person name="Khan Z.M."/>
            <person name="Kovar-Smith C."/>
            <person name="Lewis L.R."/>
            <person name="Lozado R.J."/>
            <person name="Metzker M.L."/>
            <person name="Milosavljevic A."/>
            <person name="Miner G.R."/>
            <person name="Morgan M.B."/>
            <person name="Nazareth L.V."/>
            <person name="Scott G."/>
            <person name="Sodergren E."/>
            <person name="Song X.-Z."/>
            <person name="Steffen D."/>
            <person name="Wei S."/>
            <person name="Wheeler D.A."/>
            <person name="Wright M.W."/>
            <person name="Worley K.C."/>
            <person name="Yuan Y."/>
            <person name="Zhang Z."/>
            <person name="Adams C.Q."/>
            <person name="Ansari-Lari M.A."/>
            <person name="Ayele M."/>
            <person name="Brown M.J."/>
            <person name="Chen G."/>
            <person name="Chen Z."/>
            <person name="Clendenning J."/>
            <person name="Clerc-Blankenburg K.P."/>
            <person name="Chen R."/>
            <person name="Chen Z."/>
            <person name="Davis C."/>
            <person name="Delgado O."/>
            <person name="Dinh H.H."/>
            <person name="Dong W."/>
            <person name="Draper H."/>
            <person name="Ernst S."/>
            <person name="Fu G."/>
            <person name="Gonzalez-Garay M.L."/>
            <person name="Garcia D.K."/>
            <person name="Gillett W."/>
            <person name="Gu J."/>
            <person name="Hao B."/>
            <person name="Haugen E."/>
            <person name="Havlak P."/>
            <person name="He X."/>
            <person name="Hennig S."/>
            <person name="Hu S."/>
            <person name="Huang W."/>
            <person name="Jackson L.R."/>
            <person name="Jacob L.S."/>
            <person name="Kelly S.H."/>
            <person name="Kube M."/>
            <person name="Levy R."/>
            <person name="Li Z."/>
            <person name="Liu B."/>
            <person name="Liu J."/>
            <person name="Liu W."/>
            <person name="Lu J."/>
            <person name="Maheshwari M."/>
            <person name="Nguyen B.-V."/>
            <person name="Okwuonu G.O."/>
            <person name="Palmeiri A."/>
            <person name="Pasternak S."/>
            <person name="Perez L.M."/>
            <person name="Phelps K.A."/>
            <person name="Plopper F.J."/>
            <person name="Qiang B."/>
            <person name="Raymond C."/>
            <person name="Rodriguez R."/>
            <person name="Saenphimmachak C."/>
            <person name="Santibanez J."/>
            <person name="Shen H."/>
            <person name="Shen Y."/>
            <person name="Subramanian S."/>
            <person name="Tabor P.E."/>
            <person name="Verduzco D."/>
            <person name="Waldron L."/>
            <person name="Wang J."/>
            <person name="Wang J."/>
            <person name="Wang Q."/>
            <person name="Williams G.A."/>
            <person name="Wong G.K.-S."/>
            <person name="Yao Z."/>
            <person name="Zhang J."/>
            <person name="Zhang X."/>
            <person name="Zhao G."/>
            <person name="Zhou J."/>
            <person name="Zhou Y."/>
            <person name="Nelson D."/>
            <person name="Lehrach H."/>
            <person name="Reinhardt R."/>
            <person name="Naylor S.L."/>
            <person name="Yang H."/>
            <person name="Olson M."/>
            <person name="Weinstock G."/>
            <person name="Gibbs R.A."/>
        </authorList>
    </citation>
    <scope>NUCLEOTIDE SEQUENCE [LARGE SCALE GENOMIC DNA]</scope>
</reference>
<reference key="3">
    <citation type="submission" date="2005-07" db="EMBL/GenBank/DDBJ databases">
        <authorList>
            <person name="Mural R.J."/>
            <person name="Istrail S."/>
            <person name="Sutton G.G."/>
            <person name="Florea L."/>
            <person name="Halpern A.L."/>
            <person name="Mobarry C.M."/>
            <person name="Lippert R."/>
            <person name="Walenz B."/>
            <person name="Shatkay H."/>
            <person name="Dew I."/>
            <person name="Miller J.R."/>
            <person name="Flanigan M.J."/>
            <person name="Edwards N.J."/>
            <person name="Bolanos R."/>
            <person name="Fasulo D."/>
            <person name="Halldorsson B.V."/>
            <person name="Hannenhalli S."/>
            <person name="Turner R."/>
            <person name="Yooseph S."/>
            <person name="Lu F."/>
            <person name="Nusskern D.R."/>
            <person name="Shue B.C."/>
            <person name="Zheng X.H."/>
            <person name="Zhong F."/>
            <person name="Delcher A.L."/>
            <person name="Huson D.H."/>
            <person name="Kravitz S.A."/>
            <person name="Mouchard L."/>
            <person name="Reinert K."/>
            <person name="Remington K.A."/>
            <person name="Clark A.G."/>
            <person name="Waterman M.S."/>
            <person name="Eichler E.E."/>
            <person name="Adams M.D."/>
            <person name="Hunkapiller M.W."/>
            <person name="Myers E.W."/>
            <person name="Venter J.C."/>
        </authorList>
    </citation>
    <scope>NUCLEOTIDE SEQUENCE [LARGE SCALE GENOMIC DNA]</scope>
</reference>
<reference key="4">
    <citation type="journal article" date="2004" name="Genome Res.">
        <title>The status, quality, and expansion of the NIH full-length cDNA project: the Mammalian Gene Collection (MGC).</title>
        <authorList>
            <consortium name="The MGC Project Team"/>
        </authorList>
    </citation>
    <scope>NUCLEOTIDE SEQUENCE [LARGE SCALE MRNA] (ISOFORM 2)</scope>
    <source>
        <tissue>Testis</tissue>
    </source>
</reference>
<sequence length="689" mass="76271">MIKRKIWCNLCIDLVAFTSEIFKGAVFQSLDGIVVSANCKLRKIFTLKSKPQDTADKDAVYGVPFSTDEPTDIIPRSCQLMTDVPHVTQLLNMTKLRQTEIKFGGHPLRSAESDQFINRGTSITRNSKNQDVCHIAFGSKVLGPPPLSGRRNNMKISSETVRSVGSKNNRSCQPSTVEKCVNGTEMSALLIPESEEQGNKENIHQIKQTVPIHAANLHIMHPHPPQEPSADKNNNRRRLRLKSTSRERTETPSGSSSGNNRIEDKASTILTTVSQQGAELLNSGTLGPQSPDQSDEWIFPENADHISYLASSRQSLLLGDDSCNPSHLWLEASKESEHDQQAEESQSVPKDIFTFSSRPRSAPHGKTQTMSPEELSFILDLKEDNSVTSRDTQSEDDFYGGDSSEEGNHSIQGSRGPTTGPSELTQLTLESLLGKAAKRTSKEYLRSAYTEAGATESQDSSMEQIDRNNFEMSLLPTTCLSPTGRRCGSCQKTPEPVIKAKDLSAQQVPASLNKTSLKEISGERLSSIPEASEYDWRNYQPSQMSESELQMLASLRWQQNEELEDAGTSHGLSASQVDNCNVSISTSSDDTTTWNSCLPPPVNQGRHYQKEMNPPSPSNPRDWLNMLSPPIVPPSQQPAEQRPDSCESLSVQGEEDLSVEEDEEVLTLLYDPCLNCYFDPQTGKYYELV</sequence>
<organism>
    <name type="scientific">Homo sapiens</name>
    <name type="common">Human</name>
    <dbReference type="NCBI Taxonomy" id="9606"/>
    <lineage>
        <taxon>Eukaryota</taxon>
        <taxon>Metazoa</taxon>
        <taxon>Chordata</taxon>
        <taxon>Craniata</taxon>
        <taxon>Vertebrata</taxon>
        <taxon>Euteleostomi</taxon>
        <taxon>Mammalia</taxon>
        <taxon>Eutheria</taxon>
        <taxon>Euarchontoglires</taxon>
        <taxon>Primates</taxon>
        <taxon>Haplorrhini</taxon>
        <taxon>Catarrhini</taxon>
        <taxon>Hominidae</taxon>
        <taxon>Homo</taxon>
    </lineage>
</organism>
<keyword id="KW-0025">Alternative splicing</keyword>
<keyword id="KW-1185">Reference proteome</keyword>
<proteinExistence type="evidence at transcript level"/>
<gene>
    <name evidence="5" type="primary">CFAP20DC</name>
    <name type="synonym">C3orf67</name>
</gene>
<accession>Q6ZVT6</accession>
<accession>B9EKV6</accession>
<accession>Q6ZV69</accession>